<organism>
    <name type="scientific">Mus musculus</name>
    <name type="common">Mouse</name>
    <dbReference type="NCBI Taxonomy" id="10090"/>
    <lineage>
        <taxon>Eukaryota</taxon>
        <taxon>Metazoa</taxon>
        <taxon>Chordata</taxon>
        <taxon>Craniata</taxon>
        <taxon>Vertebrata</taxon>
        <taxon>Euteleostomi</taxon>
        <taxon>Mammalia</taxon>
        <taxon>Eutheria</taxon>
        <taxon>Euarchontoglires</taxon>
        <taxon>Glires</taxon>
        <taxon>Rodentia</taxon>
        <taxon>Myomorpha</taxon>
        <taxon>Muroidea</taxon>
        <taxon>Muridae</taxon>
        <taxon>Murinae</taxon>
        <taxon>Mus</taxon>
        <taxon>Mus</taxon>
    </lineage>
</organism>
<evidence type="ECO:0000250" key="1"/>
<evidence type="ECO:0000255" key="2"/>
<evidence type="ECO:0000256" key="3">
    <source>
        <dbReference type="SAM" id="MobiDB-lite"/>
    </source>
</evidence>
<evidence type="ECO:0000269" key="4">
    <source>
    </source>
</evidence>
<evidence type="ECO:0000305" key="5"/>
<evidence type="ECO:0007744" key="6">
    <source>
    </source>
</evidence>
<feature type="chain" id="PRO_0000189424" description="Beta-taxilin">
    <location>
        <begin position="1"/>
        <end position="685"/>
    </location>
</feature>
<feature type="region of interest" description="Disordered" evidence="3">
    <location>
        <begin position="1"/>
        <end position="135"/>
    </location>
</feature>
<feature type="region of interest" description="Disordered" evidence="3">
    <location>
        <begin position="465"/>
        <end position="497"/>
    </location>
</feature>
<feature type="region of interest" description="Disordered" evidence="3">
    <location>
        <begin position="517"/>
        <end position="685"/>
    </location>
</feature>
<feature type="coiled-coil region" evidence="2">
    <location>
        <begin position="138"/>
        <end position="354"/>
    </location>
</feature>
<feature type="coiled-coil region" evidence="2">
    <location>
        <begin position="381"/>
        <end position="470"/>
    </location>
</feature>
<feature type="compositionally biased region" description="Polar residues" evidence="3">
    <location>
        <begin position="18"/>
        <end position="28"/>
    </location>
</feature>
<feature type="compositionally biased region" description="Basic and acidic residues" evidence="3">
    <location>
        <begin position="47"/>
        <end position="67"/>
    </location>
</feature>
<feature type="compositionally biased region" description="Basic and acidic residues" evidence="3">
    <location>
        <begin position="80"/>
        <end position="90"/>
    </location>
</feature>
<feature type="compositionally biased region" description="Acidic residues" evidence="3">
    <location>
        <begin position="98"/>
        <end position="113"/>
    </location>
</feature>
<feature type="compositionally biased region" description="Basic and acidic residues" evidence="3">
    <location>
        <begin position="465"/>
        <end position="478"/>
    </location>
</feature>
<feature type="compositionally biased region" description="Acidic residues" evidence="3">
    <location>
        <begin position="479"/>
        <end position="495"/>
    </location>
</feature>
<feature type="compositionally biased region" description="Low complexity" evidence="3">
    <location>
        <begin position="575"/>
        <end position="591"/>
    </location>
</feature>
<feature type="compositionally biased region" description="Polar residues" evidence="3">
    <location>
        <begin position="612"/>
        <end position="627"/>
    </location>
</feature>
<feature type="modified residue" description="Phosphoserine" evidence="6">
    <location>
        <position position="477"/>
    </location>
</feature>
<feature type="modified residue" description="Phosphoserine" evidence="6">
    <location>
        <position position="484"/>
    </location>
</feature>
<feature type="modified residue" description="Phosphoserine" evidence="6">
    <location>
        <position position="486"/>
    </location>
</feature>
<feature type="sequence conflict" description="In Ref. 1; AAL33909." evidence="5" ref="1">
    <original>RGKEST</original>
    <variation>EEGDA</variation>
    <location>
        <begin position="80"/>
        <end position="85"/>
    </location>
</feature>
<feature type="sequence conflict" description="In Ref. 2; BAC39238." evidence="5" ref="2">
    <original>VD</original>
    <variation>AY</variation>
    <location>
        <begin position="313"/>
        <end position="314"/>
    </location>
</feature>
<accession>Q8VBT1</accession>
<accession>B2RU93</accession>
<accession>Q3UVB8</accession>
<accession>Q8BUK2</accession>
<sequence length="685" mass="77207">MEINHPDQLSVEHPTPPGDSSSLNQNGPGKQDGERCSTSGQAPEQEGSLHPEKGAHDVAEELSRQLEDIISTYGSAASPRGKESTSETKEQPPNTEAPDNEDVDYEETTEEIDREPTAPEEPAAAKEPVSNKEQKLEKKILKGLGKEANLLMQNLNKLQAPEEKLDFLFKKYTELLDEHRTEQKKLKLLLKQQAQTQREKDQLQSEHNRAVLARSKLESLCRELQRHNKTLKEETLQRAREEEEKRKEITSHFQTTLTDIQTQIEQQSERNMKLCQENTELAEKLKSIIDQYELREEHLDKIFKHRELQQKLVDAKLEEAQELMQEAEERHRREKEYLLNQAAEWKLQAKVLKEQETVLQAQLTLYSGRFEEFQSTLTKSNEVFATFKQEMDKTTKKMKKLEKDTATWKARFENCNKALLDMIEEKALRAKEYECFVMKIQRLENLCRALQEERKELYKKIREAKMSEKEDQVQRTSEEEPEPSVSENEEVDAEEANSFQKAVENLATAFTILHHPEFTPDQPTERQLAVNGPQSGSDVTHQHPETARLNHPSLPADSGSPRPPVGAQAVAEGVCEATPAPTASCTPAEAELQSQGLPAENTPGPKPHKPEANTSGQAPLSPAQGSLSVVEAKYDISPSPESEGDSAVVPGCESREQPPPEVTDIPVGPSTGLPREPDACLNGVD</sequence>
<dbReference type="EMBL" id="AF422244">
    <property type="protein sequence ID" value="AAL33909.1"/>
    <property type="molecule type" value="mRNA"/>
</dbReference>
<dbReference type="EMBL" id="AF422245">
    <property type="protein sequence ID" value="AAL33910.1"/>
    <property type="molecule type" value="mRNA"/>
</dbReference>
<dbReference type="EMBL" id="AK084639">
    <property type="protein sequence ID" value="BAC39238.2"/>
    <property type="molecule type" value="mRNA"/>
</dbReference>
<dbReference type="EMBL" id="AK137442">
    <property type="protein sequence ID" value="BAE23352.1"/>
    <property type="molecule type" value="mRNA"/>
</dbReference>
<dbReference type="EMBL" id="BC141023">
    <property type="protein sequence ID" value="AAI41024.1"/>
    <property type="molecule type" value="mRNA"/>
</dbReference>
<dbReference type="CCDS" id="CCDS35851.1"/>
<dbReference type="RefSeq" id="NP_619534.2">
    <property type="nucleotide sequence ID" value="NM_138628.3"/>
</dbReference>
<dbReference type="SMR" id="Q8VBT1"/>
<dbReference type="BioGRID" id="237544">
    <property type="interactions" value="6"/>
</dbReference>
<dbReference type="FunCoup" id="Q8VBT1">
    <property type="interactions" value="697"/>
</dbReference>
<dbReference type="IntAct" id="Q8VBT1">
    <property type="interactions" value="2"/>
</dbReference>
<dbReference type="MINT" id="Q8VBT1"/>
<dbReference type="STRING" id="10090.ENSMUSP00000044936"/>
<dbReference type="GlyGen" id="Q8VBT1">
    <property type="glycosylation" value="4 sites, 1 O-linked glycan (1 site)"/>
</dbReference>
<dbReference type="iPTMnet" id="Q8VBT1"/>
<dbReference type="PhosphoSitePlus" id="Q8VBT1"/>
<dbReference type="jPOST" id="Q8VBT1"/>
<dbReference type="PaxDb" id="10090-ENSMUSP00000044936"/>
<dbReference type="PeptideAtlas" id="Q8VBT1"/>
<dbReference type="ProteomicsDB" id="297759"/>
<dbReference type="Antibodypedia" id="33084">
    <property type="antibodies" value="122 antibodies from 17 providers"/>
</dbReference>
<dbReference type="Ensembl" id="ENSMUST00000037964.7">
    <property type="protein sequence ID" value="ENSMUSP00000044936.7"/>
    <property type="gene ID" value="ENSMUSG00000039891.7"/>
</dbReference>
<dbReference type="GeneID" id="378431"/>
<dbReference type="KEGG" id="mmu:378431"/>
<dbReference type="UCSC" id="uc007elv.1">
    <property type="organism name" value="mouse"/>
</dbReference>
<dbReference type="AGR" id="MGI:2671945"/>
<dbReference type="CTD" id="167838"/>
<dbReference type="MGI" id="MGI:2671945">
    <property type="gene designation" value="Txlnb"/>
</dbReference>
<dbReference type="VEuPathDB" id="HostDB:ENSMUSG00000039891"/>
<dbReference type="eggNOG" id="KOG1850">
    <property type="taxonomic scope" value="Eukaryota"/>
</dbReference>
<dbReference type="GeneTree" id="ENSGT00940000157418"/>
<dbReference type="HOGENOM" id="CLU_025501_2_0_1"/>
<dbReference type="InParanoid" id="Q8VBT1"/>
<dbReference type="OMA" id="SPKMEAN"/>
<dbReference type="OrthoDB" id="425555at2759"/>
<dbReference type="PhylomeDB" id="Q8VBT1"/>
<dbReference type="TreeFam" id="TF318595"/>
<dbReference type="BioGRID-ORCS" id="378431">
    <property type="hits" value="3 hits in 79 CRISPR screens"/>
</dbReference>
<dbReference type="ChiTaRS" id="Txlnb">
    <property type="organism name" value="mouse"/>
</dbReference>
<dbReference type="PRO" id="PR:Q8VBT1"/>
<dbReference type="Proteomes" id="UP000000589">
    <property type="component" value="Chromosome 10"/>
</dbReference>
<dbReference type="RNAct" id="Q8VBT1">
    <property type="molecule type" value="protein"/>
</dbReference>
<dbReference type="Bgee" id="ENSMUSG00000039891">
    <property type="expression patterns" value="Expressed in interventricular septum and 106 other cell types or tissues"/>
</dbReference>
<dbReference type="GO" id="GO:0005737">
    <property type="term" value="C:cytoplasm"/>
    <property type="evidence" value="ECO:0007669"/>
    <property type="project" value="Ensembl"/>
</dbReference>
<dbReference type="GO" id="GO:0019905">
    <property type="term" value="F:syntaxin binding"/>
    <property type="evidence" value="ECO:0007669"/>
    <property type="project" value="InterPro"/>
</dbReference>
<dbReference type="InterPro" id="IPR026183">
    <property type="entry name" value="Taxilin_fam"/>
</dbReference>
<dbReference type="PANTHER" id="PTHR16127:SF10">
    <property type="entry name" value="BETA-TAXILIN"/>
    <property type="match status" value="1"/>
</dbReference>
<dbReference type="PANTHER" id="PTHR16127">
    <property type="entry name" value="TAXILIN"/>
    <property type="match status" value="1"/>
</dbReference>
<dbReference type="Pfam" id="PF09728">
    <property type="entry name" value="Taxilin"/>
    <property type="match status" value="1"/>
</dbReference>
<protein>
    <recommendedName>
        <fullName>Beta-taxilin</fullName>
    </recommendedName>
    <alternativeName>
        <fullName>Muscle-derived protein 77</fullName>
    </alternativeName>
</protein>
<proteinExistence type="evidence at protein level"/>
<keyword id="KW-0175">Coiled coil</keyword>
<keyword id="KW-0597">Phosphoprotein</keyword>
<keyword id="KW-1185">Reference proteome</keyword>
<gene>
    <name type="primary">Txlnb</name>
    <name type="synonym">Mdp77</name>
</gene>
<reference key="1">
    <citation type="journal article" date="2002" name="Genetics">
        <title>Molecular characterization of the mouse In(10)17Rk inversion and identification of a novel muscle-specific gene at the proximal breakpoint.</title>
        <authorList>
            <person name="Benson K.F."/>
            <person name="Chada K."/>
        </authorList>
    </citation>
    <scope>NUCLEOTIDE SEQUENCE [MRNA]</scope>
    <scope>TISSUE SPECIFICITY</scope>
    <source>
        <strain>C57BL/6J</strain>
        <tissue>Heart</tissue>
    </source>
</reference>
<reference key="2">
    <citation type="journal article" date="2005" name="Science">
        <title>The transcriptional landscape of the mammalian genome.</title>
        <authorList>
            <person name="Carninci P."/>
            <person name="Kasukawa T."/>
            <person name="Katayama S."/>
            <person name="Gough J."/>
            <person name="Frith M.C."/>
            <person name="Maeda N."/>
            <person name="Oyama R."/>
            <person name="Ravasi T."/>
            <person name="Lenhard B."/>
            <person name="Wells C."/>
            <person name="Kodzius R."/>
            <person name="Shimokawa K."/>
            <person name="Bajic V.B."/>
            <person name="Brenner S.E."/>
            <person name="Batalov S."/>
            <person name="Forrest A.R."/>
            <person name="Zavolan M."/>
            <person name="Davis M.J."/>
            <person name="Wilming L.G."/>
            <person name="Aidinis V."/>
            <person name="Allen J.E."/>
            <person name="Ambesi-Impiombato A."/>
            <person name="Apweiler R."/>
            <person name="Aturaliya R.N."/>
            <person name="Bailey T.L."/>
            <person name="Bansal M."/>
            <person name="Baxter L."/>
            <person name="Beisel K.W."/>
            <person name="Bersano T."/>
            <person name="Bono H."/>
            <person name="Chalk A.M."/>
            <person name="Chiu K.P."/>
            <person name="Choudhary V."/>
            <person name="Christoffels A."/>
            <person name="Clutterbuck D.R."/>
            <person name="Crowe M.L."/>
            <person name="Dalla E."/>
            <person name="Dalrymple B.P."/>
            <person name="de Bono B."/>
            <person name="Della Gatta G."/>
            <person name="di Bernardo D."/>
            <person name="Down T."/>
            <person name="Engstrom P."/>
            <person name="Fagiolini M."/>
            <person name="Faulkner G."/>
            <person name="Fletcher C.F."/>
            <person name="Fukushima T."/>
            <person name="Furuno M."/>
            <person name="Futaki S."/>
            <person name="Gariboldi M."/>
            <person name="Georgii-Hemming P."/>
            <person name="Gingeras T.R."/>
            <person name="Gojobori T."/>
            <person name="Green R.E."/>
            <person name="Gustincich S."/>
            <person name="Harbers M."/>
            <person name="Hayashi Y."/>
            <person name="Hensch T.K."/>
            <person name="Hirokawa N."/>
            <person name="Hill D."/>
            <person name="Huminiecki L."/>
            <person name="Iacono M."/>
            <person name="Ikeo K."/>
            <person name="Iwama A."/>
            <person name="Ishikawa T."/>
            <person name="Jakt M."/>
            <person name="Kanapin A."/>
            <person name="Katoh M."/>
            <person name="Kawasawa Y."/>
            <person name="Kelso J."/>
            <person name="Kitamura H."/>
            <person name="Kitano H."/>
            <person name="Kollias G."/>
            <person name="Krishnan S.P."/>
            <person name="Kruger A."/>
            <person name="Kummerfeld S.K."/>
            <person name="Kurochkin I.V."/>
            <person name="Lareau L.F."/>
            <person name="Lazarevic D."/>
            <person name="Lipovich L."/>
            <person name="Liu J."/>
            <person name="Liuni S."/>
            <person name="McWilliam S."/>
            <person name="Madan Babu M."/>
            <person name="Madera M."/>
            <person name="Marchionni L."/>
            <person name="Matsuda H."/>
            <person name="Matsuzawa S."/>
            <person name="Miki H."/>
            <person name="Mignone F."/>
            <person name="Miyake S."/>
            <person name="Morris K."/>
            <person name="Mottagui-Tabar S."/>
            <person name="Mulder N."/>
            <person name="Nakano N."/>
            <person name="Nakauchi H."/>
            <person name="Ng P."/>
            <person name="Nilsson R."/>
            <person name="Nishiguchi S."/>
            <person name="Nishikawa S."/>
            <person name="Nori F."/>
            <person name="Ohara O."/>
            <person name="Okazaki Y."/>
            <person name="Orlando V."/>
            <person name="Pang K.C."/>
            <person name="Pavan W.J."/>
            <person name="Pavesi G."/>
            <person name="Pesole G."/>
            <person name="Petrovsky N."/>
            <person name="Piazza S."/>
            <person name="Reed J."/>
            <person name="Reid J.F."/>
            <person name="Ring B.Z."/>
            <person name="Ringwald M."/>
            <person name="Rost B."/>
            <person name="Ruan Y."/>
            <person name="Salzberg S.L."/>
            <person name="Sandelin A."/>
            <person name="Schneider C."/>
            <person name="Schoenbach C."/>
            <person name="Sekiguchi K."/>
            <person name="Semple C.A."/>
            <person name="Seno S."/>
            <person name="Sessa L."/>
            <person name="Sheng Y."/>
            <person name="Shibata Y."/>
            <person name="Shimada H."/>
            <person name="Shimada K."/>
            <person name="Silva D."/>
            <person name="Sinclair B."/>
            <person name="Sperling S."/>
            <person name="Stupka E."/>
            <person name="Sugiura K."/>
            <person name="Sultana R."/>
            <person name="Takenaka Y."/>
            <person name="Taki K."/>
            <person name="Tammoja K."/>
            <person name="Tan S.L."/>
            <person name="Tang S."/>
            <person name="Taylor M.S."/>
            <person name="Tegner J."/>
            <person name="Teichmann S.A."/>
            <person name="Ueda H.R."/>
            <person name="van Nimwegen E."/>
            <person name="Verardo R."/>
            <person name="Wei C.L."/>
            <person name="Yagi K."/>
            <person name="Yamanishi H."/>
            <person name="Zabarovsky E."/>
            <person name="Zhu S."/>
            <person name="Zimmer A."/>
            <person name="Hide W."/>
            <person name="Bult C."/>
            <person name="Grimmond S.M."/>
            <person name="Teasdale R.D."/>
            <person name="Liu E.T."/>
            <person name="Brusic V."/>
            <person name="Quackenbush J."/>
            <person name="Wahlestedt C."/>
            <person name="Mattick J.S."/>
            <person name="Hume D.A."/>
            <person name="Kai C."/>
            <person name="Sasaki D."/>
            <person name="Tomaru Y."/>
            <person name="Fukuda S."/>
            <person name="Kanamori-Katayama M."/>
            <person name="Suzuki M."/>
            <person name="Aoki J."/>
            <person name="Arakawa T."/>
            <person name="Iida J."/>
            <person name="Imamura K."/>
            <person name="Itoh M."/>
            <person name="Kato T."/>
            <person name="Kawaji H."/>
            <person name="Kawagashira N."/>
            <person name="Kawashima T."/>
            <person name="Kojima M."/>
            <person name="Kondo S."/>
            <person name="Konno H."/>
            <person name="Nakano K."/>
            <person name="Ninomiya N."/>
            <person name="Nishio T."/>
            <person name="Okada M."/>
            <person name="Plessy C."/>
            <person name="Shibata K."/>
            <person name="Shiraki T."/>
            <person name="Suzuki S."/>
            <person name="Tagami M."/>
            <person name="Waki K."/>
            <person name="Watahiki A."/>
            <person name="Okamura-Oho Y."/>
            <person name="Suzuki H."/>
            <person name="Kawai J."/>
            <person name="Hayashizaki Y."/>
        </authorList>
    </citation>
    <scope>NUCLEOTIDE SEQUENCE [LARGE SCALE MRNA]</scope>
    <source>
        <strain>C57BL/6J</strain>
        <tissue>Bone</tissue>
        <tissue>Embryonic heart</tissue>
    </source>
</reference>
<reference key="3">
    <citation type="journal article" date="2004" name="Genome Res.">
        <title>The status, quality, and expansion of the NIH full-length cDNA project: the Mammalian Gene Collection (MGC).</title>
        <authorList>
            <consortium name="The MGC Project Team"/>
        </authorList>
    </citation>
    <scope>NUCLEOTIDE SEQUENCE [LARGE SCALE MRNA]</scope>
    <source>
        <tissue>Brain</tissue>
    </source>
</reference>
<reference key="4">
    <citation type="journal article" date="2010" name="Cell">
        <title>A tissue-specific atlas of mouse protein phosphorylation and expression.</title>
        <authorList>
            <person name="Huttlin E.L."/>
            <person name="Jedrychowski M.P."/>
            <person name="Elias J.E."/>
            <person name="Goswami T."/>
            <person name="Rad R."/>
            <person name="Beausoleil S.A."/>
            <person name="Villen J."/>
            <person name="Haas W."/>
            <person name="Sowa M.E."/>
            <person name="Gygi S.P."/>
        </authorList>
    </citation>
    <scope>PHOSPHORYLATION [LARGE SCALE ANALYSIS] AT SER-477; SER-484 AND SER-486</scope>
    <scope>IDENTIFICATION BY MASS SPECTROMETRY [LARGE SCALE ANALYSIS]</scope>
    <source>
        <tissue>Heart</tissue>
    </source>
</reference>
<comment type="function">
    <text evidence="1">Promotes motor nerve regeneration. May be involved in intracellular vesicle traffic (By similarity).</text>
</comment>
<comment type="subunit">
    <text evidence="1">Binds to the C-terminal coiled coil region of syntaxin family members STX1A, STX3A and STX4A. Has a preference for STX1A (By similarity).</text>
</comment>
<comment type="tissue specificity">
    <text evidence="4">Specifically expressed in skeletal muscle.</text>
</comment>
<comment type="similarity">
    <text evidence="5">Belongs to the taxilin family.</text>
</comment>
<name>TXLNB_MOUSE</name>